<sequence length="674" mass="75586">MQITEKETVQEEQQKLLYPPPSFSTKCHISSVEQYNEMYKESIESPNQFWDKKAKEFLTWFSDYTTVQHGSFEKGDISWFLNGKINVSYNCIDRHLKENADKVAILFEGDEETMVKKVTYREMFEEVCRLSNLLISLGVGKGDTVAIYLPNTPTAIYSMLACARIGAIHSVIFAGFGYESIVSRVHDAKCRVIITADEGLRGGRYIPLKEKIDQVVQHCKLVQHVLVFKNTGRPTITFNPSIDIWADEAMLDHRPYCPPVWLDSEDPLFILYTSGSTGTPKGLVHTQAGYLLYAAMTHRYVFDYHDSDVYACMADVGWITGHSYIVYGPLANGATTFIFEGTPLYPTPARYWEMVQRHKITQFYTAPTAIRSLMKFPISFTQQSDKSSLRVLGSVGEPINPEAWRWFNTNVGEGRCAIVDTYWQTESGGHLITPLPGVTSTKPGSATKPFFGIELQVLDSKTGERLYINPDINGCKEISGVLAISKPWPGIARSVYRSHGRYLQTYMTQYKGHYFTGDGVKLDSDGYYWIEGRVDDVINVSGHRLGTAELESALVGCSICAEAAVVGYPHDIKGQGILAFCTLKEGYQEDESNVIMMLKKEVRNVIGPFATPDVIVITPSLPKTRSGKIMRRILRKIGCHESSAEQLGDISTLAEPEVVKLLIEKVSKVIPKTH</sequence>
<feature type="chain" id="PRO_0000328354" description="Acetyl-coenzyme A synthetase">
    <location>
        <begin position="1"/>
        <end position="674"/>
    </location>
</feature>
<feature type="binding site" evidence="1">
    <location>
        <begin position="201"/>
        <end position="204"/>
    </location>
    <ligand>
        <name>CoA</name>
        <dbReference type="ChEBI" id="CHEBI:57287"/>
    </ligand>
</feature>
<feature type="binding site" evidence="1">
    <location>
        <position position="320"/>
    </location>
    <ligand>
        <name>CoA</name>
        <dbReference type="ChEBI" id="CHEBI:57287"/>
    </ligand>
</feature>
<feature type="binding site" evidence="1">
    <location>
        <begin position="396"/>
        <end position="398"/>
    </location>
    <ligand>
        <name>ATP</name>
        <dbReference type="ChEBI" id="CHEBI:30616"/>
    </ligand>
</feature>
<feature type="binding site" evidence="1">
    <location>
        <begin position="420"/>
        <end position="425"/>
    </location>
    <ligand>
        <name>ATP</name>
        <dbReference type="ChEBI" id="CHEBI:30616"/>
    </ligand>
</feature>
<feature type="binding site" evidence="1">
    <location>
        <position position="518"/>
    </location>
    <ligand>
        <name>ATP</name>
        <dbReference type="ChEBI" id="CHEBI:30616"/>
    </ligand>
</feature>
<feature type="binding site" evidence="1">
    <location>
        <position position="533"/>
    </location>
    <ligand>
        <name>ATP</name>
        <dbReference type="ChEBI" id="CHEBI:30616"/>
    </ligand>
</feature>
<feature type="binding site" evidence="1">
    <location>
        <position position="541"/>
    </location>
    <ligand>
        <name>CoA</name>
        <dbReference type="ChEBI" id="CHEBI:57287"/>
    </ligand>
</feature>
<feature type="binding site" evidence="1">
    <location>
        <position position="544"/>
    </location>
    <ligand>
        <name>ATP</name>
        <dbReference type="ChEBI" id="CHEBI:30616"/>
    </ligand>
</feature>
<feature type="binding site" evidence="1">
    <location>
        <position position="603"/>
    </location>
    <ligand>
        <name>CoA</name>
        <dbReference type="ChEBI" id="CHEBI:57287"/>
    </ligand>
</feature>
<reference key="1">
    <citation type="journal article" date="2002" name="Nature">
        <title>Sequence and analysis of chromosome 2 of Dictyostelium discoideum.</title>
        <authorList>
            <person name="Gloeckner G."/>
            <person name="Eichinger L."/>
            <person name="Szafranski K."/>
            <person name="Pachebat J.A."/>
            <person name="Bankier A.T."/>
            <person name="Dear P.H."/>
            <person name="Lehmann R."/>
            <person name="Baumgart C."/>
            <person name="Parra G."/>
            <person name="Abril J.F."/>
            <person name="Guigo R."/>
            <person name="Kumpf K."/>
            <person name="Tunggal B."/>
            <person name="Cox E.C."/>
            <person name="Quail M.A."/>
            <person name="Platzer M."/>
            <person name="Rosenthal A."/>
            <person name="Noegel A.A."/>
        </authorList>
    </citation>
    <scope>NUCLEOTIDE SEQUENCE [LARGE SCALE GENOMIC DNA]</scope>
    <source>
        <strain>AX4</strain>
    </source>
</reference>
<reference key="2">
    <citation type="journal article" date="2005" name="Nature">
        <title>The genome of the social amoeba Dictyostelium discoideum.</title>
        <authorList>
            <person name="Eichinger L."/>
            <person name="Pachebat J.A."/>
            <person name="Gloeckner G."/>
            <person name="Rajandream M.A."/>
            <person name="Sucgang R."/>
            <person name="Berriman M."/>
            <person name="Song J."/>
            <person name="Olsen R."/>
            <person name="Szafranski K."/>
            <person name="Xu Q."/>
            <person name="Tunggal B."/>
            <person name="Kummerfeld S."/>
            <person name="Madera M."/>
            <person name="Konfortov B.A."/>
            <person name="Rivero F."/>
            <person name="Bankier A.T."/>
            <person name="Lehmann R."/>
            <person name="Hamlin N."/>
            <person name="Davies R."/>
            <person name="Gaudet P."/>
            <person name="Fey P."/>
            <person name="Pilcher K."/>
            <person name="Chen G."/>
            <person name="Saunders D."/>
            <person name="Sodergren E.J."/>
            <person name="Davis P."/>
            <person name="Kerhornou A."/>
            <person name="Nie X."/>
            <person name="Hall N."/>
            <person name="Anjard C."/>
            <person name="Hemphill L."/>
            <person name="Bason N."/>
            <person name="Farbrother P."/>
            <person name="Desany B."/>
            <person name="Just E."/>
            <person name="Morio T."/>
            <person name="Rost R."/>
            <person name="Churcher C.M."/>
            <person name="Cooper J."/>
            <person name="Haydock S."/>
            <person name="van Driessche N."/>
            <person name="Cronin A."/>
            <person name="Goodhead I."/>
            <person name="Muzny D.M."/>
            <person name="Mourier T."/>
            <person name="Pain A."/>
            <person name="Lu M."/>
            <person name="Harper D."/>
            <person name="Lindsay R."/>
            <person name="Hauser H."/>
            <person name="James K.D."/>
            <person name="Quiles M."/>
            <person name="Madan Babu M."/>
            <person name="Saito T."/>
            <person name="Buchrieser C."/>
            <person name="Wardroper A."/>
            <person name="Felder M."/>
            <person name="Thangavelu M."/>
            <person name="Johnson D."/>
            <person name="Knights A."/>
            <person name="Loulseged H."/>
            <person name="Mungall K.L."/>
            <person name="Oliver K."/>
            <person name="Price C."/>
            <person name="Quail M.A."/>
            <person name="Urushihara H."/>
            <person name="Hernandez J."/>
            <person name="Rabbinowitsch E."/>
            <person name="Steffen D."/>
            <person name="Sanders M."/>
            <person name="Ma J."/>
            <person name="Kohara Y."/>
            <person name="Sharp S."/>
            <person name="Simmonds M.N."/>
            <person name="Spiegler S."/>
            <person name="Tivey A."/>
            <person name="Sugano S."/>
            <person name="White B."/>
            <person name="Walker D."/>
            <person name="Woodward J.R."/>
            <person name="Winckler T."/>
            <person name="Tanaka Y."/>
            <person name="Shaulsky G."/>
            <person name="Schleicher M."/>
            <person name="Weinstock G.M."/>
            <person name="Rosenthal A."/>
            <person name="Cox E.C."/>
            <person name="Chisholm R.L."/>
            <person name="Gibbs R.A."/>
            <person name="Loomis W.F."/>
            <person name="Platzer M."/>
            <person name="Kay R.R."/>
            <person name="Williams J.G."/>
            <person name="Dear P.H."/>
            <person name="Noegel A.A."/>
            <person name="Barrell B.G."/>
            <person name="Kuspa A."/>
        </authorList>
    </citation>
    <scope>NUCLEOTIDE SEQUENCE [LARGE SCALE GENOMIC DNA]</scope>
    <source>
        <strain>AX4</strain>
    </source>
</reference>
<accession>Q54Z60</accession>
<accession>Q86AW6</accession>
<organism>
    <name type="scientific">Dictyostelium discoideum</name>
    <name type="common">Social amoeba</name>
    <dbReference type="NCBI Taxonomy" id="44689"/>
    <lineage>
        <taxon>Eukaryota</taxon>
        <taxon>Amoebozoa</taxon>
        <taxon>Evosea</taxon>
        <taxon>Eumycetozoa</taxon>
        <taxon>Dictyostelia</taxon>
        <taxon>Dictyosteliales</taxon>
        <taxon>Dictyosteliaceae</taxon>
        <taxon>Dictyostelium</taxon>
    </lineage>
</organism>
<evidence type="ECO:0000250" key="1"/>
<evidence type="ECO:0000305" key="2"/>
<name>ACSA_DICDI</name>
<gene>
    <name type="primary">acsA</name>
    <name type="ORF">DDB_G0277815</name>
</gene>
<protein>
    <recommendedName>
        <fullName>Acetyl-coenzyme A synthetase</fullName>
        <ecNumber>6.2.1.1</ecNumber>
    </recommendedName>
    <alternativeName>
        <fullName>Acetate--CoA ligase</fullName>
    </alternativeName>
    <alternativeName>
        <fullName>Acyl-activating enzyme</fullName>
    </alternativeName>
</protein>
<comment type="catalytic activity">
    <reaction>
        <text>acetate + ATP + CoA = acetyl-CoA + AMP + diphosphate</text>
        <dbReference type="Rhea" id="RHEA:23176"/>
        <dbReference type="ChEBI" id="CHEBI:30089"/>
        <dbReference type="ChEBI" id="CHEBI:30616"/>
        <dbReference type="ChEBI" id="CHEBI:33019"/>
        <dbReference type="ChEBI" id="CHEBI:57287"/>
        <dbReference type="ChEBI" id="CHEBI:57288"/>
        <dbReference type="ChEBI" id="CHEBI:456215"/>
        <dbReference type="EC" id="6.2.1.1"/>
    </reaction>
</comment>
<comment type="similarity">
    <text evidence="2">Belongs to the ATP-dependent AMP-binding enzyme family.</text>
</comment>
<proteinExistence type="inferred from homology"/>
<keyword id="KW-0067">ATP-binding</keyword>
<keyword id="KW-0436">Ligase</keyword>
<keyword id="KW-0547">Nucleotide-binding</keyword>
<keyword id="KW-1185">Reference proteome</keyword>
<dbReference type="EC" id="6.2.1.1"/>
<dbReference type="EMBL" id="AAFI02000022">
    <property type="protein sequence ID" value="EAL68581.1"/>
    <property type="molecule type" value="Genomic_DNA"/>
</dbReference>
<dbReference type="RefSeq" id="XP_642493.1">
    <property type="nucleotide sequence ID" value="XM_637401.1"/>
</dbReference>
<dbReference type="SMR" id="Q54Z60"/>
<dbReference type="BioGRID" id="1246207">
    <property type="interactions" value="1"/>
</dbReference>
<dbReference type="FunCoup" id="Q54Z60">
    <property type="interactions" value="630"/>
</dbReference>
<dbReference type="STRING" id="44689.Q54Z60"/>
<dbReference type="GlyGen" id="Q54Z60">
    <property type="glycosylation" value="1 site"/>
</dbReference>
<dbReference type="PaxDb" id="44689-DDB0231684"/>
<dbReference type="EnsemblProtists" id="EAL68581">
    <property type="protein sequence ID" value="EAL68581"/>
    <property type="gene ID" value="DDB_G0277815"/>
</dbReference>
<dbReference type="GeneID" id="8621204"/>
<dbReference type="KEGG" id="ddi:DDB_G0277815"/>
<dbReference type="dictyBase" id="DDB_G0277815">
    <property type="gene designation" value="acsA"/>
</dbReference>
<dbReference type="VEuPathDB" id="AmoebaDB:DDB_G0277815"/>
<dbReference type="eggNOG" id="KOG1175">
    <property type="taxonomic scope" value="Eukaryota"/>
</dbReference>
<dbReference type="HOGENOM" id="CLU_000022_3_6_1"/>
<dbReference type="InParanoid" id="Q54Z60"/>
<dbReference type="OMA" id="INVSYNC"/>
<dbReference type="PhylomeDB" id="Q54Z60"/>
<dbReference type="Reactome" id="R-DDI-2151201">
    <property type="pathway name" value="Transcriptional activation of mitochondrial biogenesis"/>
</dbReference>
<dbReference type="Reactome" id="R-DDI-71384">
    <property type="pathway name" value="Ethanol oxidation"/>
</dbReference>
<dbReference type="PRO" id="PR:Q54Z60"/>
<dbReference type="Proteomes" id="UP000002195">
    <property type="component" value="Chromosome 2"/>
</dbReference>
<dbReference type="GO" id="GO:0003987">
    <property type="term" value="F:acetate-CoA ligase activity"/>
    <property type="evidence" value="ECO:0000250"/>
    <property type="project" value="dictyBase"/>
</dbReference>
<dbReference type="GO" id="GO:0016208">
    <property type="term" value="F:AMP binding"/>
    <property type="evidence" value="ECO:0000250"/>
    <property type="project" value="dictyBase"/>
</dbReference>
<dbReference type="GO" id="GO:0005524">
    <property type="term" value="F:ATP binding"/>
    <property type="evidence" value="ECO:0007669"/>
    <property type="project" value="UniProtKB-KW"/>
</dbReference>
<dbReference type="GO" id="GO:0006085">
    <property type="term" value="P:acetyl-CoA biosynthetic process"/>
    <property type="evidence" value="ECO:0000250"/>
    <property type="project" value="dictyBase"/>
</dbReference>
<dbReference type="GO" id="GO:0019427">
    <property type="term" value="P:acetyl-CoA biosynthetic process from acetate"/>
    <property type="evidence" value="ECO:0007669"/>
    <property type="project" value="InterPro"/>
</dbReference>
<dbReference type="CDD" id="cd05966">
    <property type="entry name" value="ACS"/>
    <property type="match status" value="1"/>
</dbReference>
<dbReference type="FunFam" id="3.30.300.30:FF:000004">
    <property type="entry name" value="Acetyl-coenzyme A synthetase"/>
    <property type="match status" value="1"/>
</dbReference>
<dbReference type="FunFam" id="3.40.50.12780:FF:000001">
    <property type="entry name" value="Acetyl-coenzyme A synthetase"/>
    <property type="match status" value="1"/>
</dbReference>
<dbReference type="Gene3D" id="3.30.300.30">
    <property type="match status" value="1"/>
</dbReference>
<dbReference type="Gene3D" id="3.40.50.12780">
    <property type="entry name" value="N-terminal domain of ligase-like"/>
    <property type="match status" value="1"/>
</dbReference>
<dbReference type="InterPro" id="IPR011904">
    <property type="entry name" value="Ac_CoA_lig"/>
</dbReference>
<dbReference type="InterPro" id="IPR032387">
    <property type="entry name" value="ACAS_N"/>
</dbReference>
<dbReference type="InterPro" id="IPR025110">
    <property type="entry name" value="AMP-bd_C"/>
</dbReference>
<dbReference type="InterPro" id="IPR045851">
    <property type="entry name" value="AMP-bd_C_sf"/>
</dbReference>
<dbReference type="InterPro" id="IPR020845">
    <property type="entry name" value="AMP-binding_CS"/>
</dbReference>
<dbReference type="InterPro" id="IPR000873">
    <property type="entry name" value="AMP-dep_synth/lig_dom"/>
</dbReference>
<dbReference type="InterPro" id="IPR042099">
    <property type="entry name" value="ANL_N_sf"/>
</dbReference>
<dbReference type="NCBIfam" id="TIGR02188">
    <property type="entry name" value="Ac_CoA_lig_AcsA"/>
    <property type="match status" value="1"/>
</dbReference>
<dbReference type="NCBIfam" id="NF001208">
    <property type="entry name" value="PRK00174.1"/>
    <property type="match status" value="1"/>
</dbReference>
<dbReference type="PANTHER" id="PTHR24095">
    <property type="entry name" value="ACETYL-COENZYME A SYNTHETASE"/>
    <property type="match status" value="1"/>
</dbReference>
<dbReference type="PANTHER" id="PTHR24095:SF14">
    <property type="entry name" value="ACETYL-COENZYME A SYNTHETASE 1"/>
    <property type="match status" value="1"/>
</dbReference>
<dbReference type="Pfam" id="PF16177">
    <property type="entry name" value="ACAS_N"/>
    <property type="match status" value="1"/>
</dbReference>
<dbReference type="Pfam" id="PF00501">
    <property type="entry name" value="AMP-binding"/>
    <property type="match status" value="1"/>
</dbReference>
<dbReference type="Pfam" id="PF13193">
    <property type="entry name" value="AMP-binding_C"/>
    <property type="match status" value="1"/>
</dbReference>
<dbReference type="SUPFAM" id="SSF56801">
    <property type="entry name" value="Acetyl-CoA synthetase-like"/>
    <property type="match status" value="1"/>
</dbReference>
<dbReference type="PROSITE" id="PS00455">
    <property type="entry name" value="AMP_BINDING"/>
    <property type="match status" value="1"/>
</dbReference>